<accession>Q02W35</accession>
<organism>
    <name type="scientific">Lactococcus lactis subsp. cremoris (strain SK11)</name>
    <dbReference type="NCBI Taxonomy" id="272622"/>
    <lineage>
        <taxon>Bacteria</taxon>
        <taxon>Bacillati</taxon>
        <taxon>Bacillota</taxon>
        <taxon>Bacilli</taxon>
        <taxon>Lactobacillales</taxon>
        <taxon>Streptococcaceae</taxon>
        <taxon>Lactococcus</taxon>
        <taxon>Lactococcus cremoris subsp. cremoris</taxon>
    </lineage>
</organism>
<gene>
    <name evidence="1" type="primary">rplX</name>
    <name type="ordered locus">LACR_2391</name>
</gene>
<name>RL24_LACLS</name>
<protein>
    <recommendedName>
        <fullName evidence="1">Large ribosomal subunit protein uL24</fullName>
    </recommendedName>
    <alternativeName>
        <fullName evidence="2">50S ribosomal protein L24</fullName>
    </alternativeName>
</protein>
<feature type="chain" id="PRO_1000052238" description="Large ribosomal subunit protein uL24">
    <location>
        <begin position="1"/>
        <end position="101"/>
    </location>
</feature>
<keyword id="KW-0687">Ribonucleoprotein</keyword>
<keyword id="KW-0689">Ribosomal protein</keyword>
<keyword id="KW-0694">RNA-binding</keyword>
<keyword id="KW-0699">rRNA-binding</keyword>
<dbReference type="EMBL" id="CP000425">
    <property type="protein sequence ID" value="ABJ73837.1"/>
    <property type="molecule type" value="Genomic_DNA"/>
</dbReference>
<dbReference type="RefSeq" id="WP_003129951.1">
    <property type="nucleotide sequence ID" value="NC_008527.1"/>
</dbReference>
<dbReference type="SMR" id="Q02W35"/>
<dbReference type="GeneID" id="89634435"/>
<dbReference type="KEGG" id="llc:LACR_2391"/>
<dbReference type="HOGENOM" id="CLU_093315_2_0_9"/>
<dbReference type="Proteomes" id="UP000000240">
    <property type="component" value="Chromosome"/>
</dbReference>
<dbReference type="GO" id="GO:1990904">
    <property type="term" value="C:ribonucleoprotein complex"/>
    <property type="evidence" value="ECO:0007669"/>
    <property type="project" value="UniProtKB-KW"/>
</dbReference>
<dbReference type="GO" id="GO:0005840">
    <property type="term" value="C:ribosome"/>
    <property type="evidence" value="ECO:0007669"/>
    <property type="project" value="UniProtKB-KW"/>
</dbReference>
<dbReference type="GO" id="GO:0019843">
    <property type="term" value="F:rRNA binding"/>
    <property type="evidence" value="ECO:0007669"/>
    <property type="project" value="UniProtKB-UniRule"/>
</dbReference>
<dbReference type="GO" id="GO:0003735">
    <property type="term" value="F:structural constituent of ribosome"/>
    <property type="evidence" value="ECO:0007669"/>
    <property type="project" value="InterPro"/>
</dbReference>
<dbReference type="GO" id="GO:0006412">
    <property type="term" value="P:translation"/>
    <property type="evidence" value="ECO:0007669"/>
    <property type="project" value="UniProtKB-UniRule"/>
</dbReference>
<dbReference type="CDD" id="cd06089">
    <property type="entry name" value="KOW_RPL26"/>
    <property type="match status" value="1"/>
</dbReference>
<dbReference type="FunFam" id="2.30.30.30:FF:000004">
    <property type="entry name" value="50S ribosomal protein L24"/>
    <property type="match status" value="1"/>
</dbReference>
<dbReference type="Gene3D" id="2.30.30.30">
    <property type="match status" value="1"/>
</dbReference>
<dbReference type="HAMAP" id="MF_01326_B">
    <property type="entry name" value="Ribosomal_uL24_B"/>
    <property type="match status" value="1"/>
</dbReference>
<dbReference type="InterPro" id="IPR005824">
    <property type="entry name" value="KOW"/>
</dbReference>
<dbReference type="InterPro" id="IPR014722">
    <property type="entry name" value="Rib_uL2_dom2"/>
</dbReference>
<dbReference type="InterPro" id="IPR003256">
    <property type="entry name" value="Ribosomal_uL24"/>
</dbReference>
<dbReference type="InterPro" id="IPR005825">
    <property type="entry name" value="Ribosomal_uL24_CS"/>
</dbReference>
<dbReference type="InterPro" id="IPR041988">
    <property type="entry name" value="Ribosomal_uL24_KOW"/>
</dbReference>
<dbReference type="InterPro" id="IPR008991">
    <property type="entry name" value="Translation_prot_SH3-like_sf"/>
</dbReference>
<dbReference type="NCBIfam" id="TIGR01079">
    <property type="entry name" value="rplX_bact"/>
    <property type="match status" value="1"/>
</dbReference>
<dbReference type="PANTHER" id="PTHR12903">
    <property type="entry name" value="MITOCHONDRIAL RIBOSOMAL PROTEIN L24"/>
    <property type="match status" value="1"/>
</dbReference>
<dbReference type="Pfam" id="PF00467">
    <property type="entry name" value="KOW"/>
    <property type="match status" value="1"/>
</dbReference>
<dbReference type="Pfam" id="PF17136">
    <property type="entry name" value="ribosomal_L24"/>
    <property type="match status" value="1"/>
</dbReference>
<dbReference type="SMART" id="SM00739">
    <property type="entry name" value="KOW"/>
    <property type="match status" value="1"/>
</dbReference>
<dbReference type="SUPFAM" id="SSF50104">
    <property type="entry name" value="Translation proteins SH3-like domain"/>
    <property type="match status" value="1"/>
</dbReference>
<dbReference type="PROSITE" id="PS01108">
    <property type="entry name" value="RIBOSOMAL_L24"/>
    <property type="match status" value="1"/>
</dbReference>
<sequence>MFVKTGDTVKVIAGKDRGTTGKVIKALPKVNKVVVEGVAIMKKHQKPNSENPSGAILEIEAPIHVSNVQVLDKNGVAGRVGYKVVDDKKVRFNKKSGEILD</sequence>
<proteinExistence type="inferred from homology"/>
<reference key="1">
    <citation type="journal article" date="2006" name="Proc. Natl. Acad. Sci. U.S.A.">
        <title>Comparative genomics of the lactic acid bacteria.</title>
        <authorList>
            <person name="Makarova K.S."/>
            <person name="Slesarev A."/>
            <person name="Wolf Y.I."/>
            <person name="Sorokin A."/>
            <person name="Mirkin B."/>
            <person name="Koonin E.V."/>
            <person name="Pavlov A."/>
            <person name="Pavlova N."/>
            <person name="Karamychev V."/>
            <person name="Polouchine N."/>
            <person name="Shakhova V."/>
            <person name="Grigoriev I."/>
            <person name="Lou Y."/>
            <person name="Rohksar D."/>
            <person name="Lucas S."/>
            <person name="Huang K."/>
            <person name="Goodstein D.M."/>
            <person name="Hawkins T."/>
            <person name="Plengvidhya V."/>
            <person name="Welker D."/>
            <person name="Hughes J."/>
            <person name="Goh Y."/>
            <person name="Benson A."/>
            <person name="Baldwin K."/>
            <person name="Lee J.-H."/>
            <person name="Diaz-Muniz I."/>
            <person name="Dosti B."/>
            <person name="Smeianov V."/>
            <person name="Wechter W."/>
            <person name="Barabote R."/>
            <person name="Lorca G."/>
            <person name="Altermann E."/>
            <person name="Barrangou R."/>
            <person name="Ganesan B."/>
            <person name="Xie Y."/>
            <person name="Rawsthorne H."/>
            <person name="Tamir D."/>
            <person name="Parker C."/>
            <person name="Breidt F."/>
            <person name="Broadbent J.R."/>
            <person name="Hutkins R."/>
            <person name="O'Sullivan D."/>
            <person name="Steele J."/>
            <person name="Unlu G."/>
            <person name="Saier M.H. Jr."/>
            <person name="Klaenhammer T."/>
            <person name="Richardson P."/>
            <person name="Kozyavkin S."/>
            <person name="Weimer B.C."/>
            <person name="Mills D.A."/>
        </authorList>
    </citation>
    <scope>NUCLEOTIDE SEQUENCE [LARGE SCALE GENOMIC DNA]</scope>
    <source>
        <strain>SK11</strain>
    </source>
</reference>
<evidence type="ECO:0000255" key="1">
    <source>
        <dbReference type="HAMAP-Rule" id="MF_01326"/>
    </source>
</evidence>
<evidence type="ECO:0000305" key="2"/>
<comment type="function">
    <text evidence="1">One of two assembly initiator proteins, it binds directly to the 5'-end of the 23S rRNA, where it nucleates assembly of the 50S subunit.</text>
</comment>
<comment type="function">
    <text evidence="1">One of the proteins that surrounds the polypeptide exit tunnel on the outside of the subunit.</text>
</comment>
<comment type="subunit">
    <text evidence="1">Part of the 50S ribosomal subunit.</text>
</comment>
<comment type="similarity">
    <text evidence="1">Belongs to the universal ribosomal protein uL24 family.</text>
</comment>